<proteinExistence type="inferred from homology"/>
<gene>
    <name type="primary">ompK</name>
    <name type="ordered locus">VP2362</name>
</gene>
<reference key="1">
    <citation type="journal article" date="2003" name="Lancet">
        <title>Genome sequence of Vibrio parahaemolyticus: a pathogenic mechanism distinct from that of V. cholerae.</title>
        <authorList>
            <person name="Makino K."/>
            <person name="Oshima K."/>
            <person name="Kurokawa K."/>
            <person name="Yokoyama K."/>
            <person name="Uda T."/>
            <person name="Tagomori K."/>
            <person name="Iijima Y."/>
            <person name="Najima M."/>
            <person name="Nakano M."/>
            <person name="Yamashita A."/>
            <person name="Kubota Y."/>
            <person name="Kimura S."/>
            <person name="Yasunaga T."/>
            <person name="Honda T."/>
            <person name="Shinagawa H."/>
            <person name="Hattori M."/>
            <person name="Iida T."/>
        </authorList>
    </citation>
    <scope>NUCLEOTIDE SEQUENCE [LARGE SCALE GENOMIC DNA]</scope>
    <source>
        <strain>RIMD 2210633</strain>
    </source>
</reference>
<organism>
    <name type="scientific">Vibrio parahaemolyticus serotype O3:K6 (strain RIMD 2210633)</name>
    <dbReference type="NCBI Taxonomy" id="223926"/>
    <lineage>
        <taxon>Bacteria</taxon>
        <taxon>Pseudomonadati</taxon>
        <taxon>Pseudomonadota</taxon>
        <taxon>Gammaproteobacteria</taxon>
        <taxon>Vibrionales</taxon>
        <taxon>Vibrionaceae</taxon>
        <taxon>Vibrio</taxon>
    </lineage>
</organism>
<name>OMPK_VIBPA</name>
<protein>
    <recommendedName>
        <fullName evidence="1">Outer membrane protein OmpK</fullName>
    </recommendedName>
</protein>
<comment type="function">
    <text evidence="1">Serves as receptor for a broad-host-range vibriophage, KVP40.</text>
</comment>
<comment type="subcellular location">
    <subcellularLocation>
        <location evidence="1">Cell outer membrane</location>
    </subcellularLocation>
</comment>
<comment type="similarity">
    <text evidence="3">Belongs to the nucleoside-specific channel-forming outer membrane porin (Tsx) (TC 1.B.10) family.</text>
</comment>
<feature type="signal peptide" evidence="2">
    <location>
        <begin position="1"/>
        <end position="20"/>
    </location>
</feature>
<feature type="chain" id="PRO_0000021894" description="Outer membrane protein OmpK">
    <location>
        <begin position="21"/>
        <end position="266"/>
    </location>
</feature>
<sequence length="266" mass="29877">MRKSLLALSLLAATSAPVLAADYSDGDIHKNDYKWMQFNLMGAFDELPGESSHDYLEMEFGGRSGIFDLYGYVDVFNLASDKGSDKVGDPKIFMKFAPRMSIDGLTGKDLSFGPVQELYVATLFEWDGTDYKTNPFSVNNQKVGIGSDVMVPWFGKVGVNLYGTYQGNQKDWNGFQISTNWFKPFYFFENGSFISYQGYIDYQFGMKEKYSSASNGGAMFNGIYWHSDRFAVGYGLKGYKDVYGIKDSDALKSTGFGHYVAVTYKF</sequence>
<dbReference type="EMBL" id="BA000031">
    <property type="protein sequence ID" value="BAC60625.1"/>
    <property type="molecule type" value="Genomic_DNA"/>
</dbReference>
<dbReference type="RefSeq" id="NP_798741.1">
    <property type="nucleotide sequence ID" value="NC_004603.1"/>
</dbReference>
<dbReference type="RefSeq" id="WP_005482307.1">
    <property type="nucleotide sequence ID" value="NC_004603.1"/>
</dbReference>
<dbReference type="SMR" id="P59570"/>
<dbReference type="GeneID" id="1189875"/>
<dbReference type="KEGG" id="vpa:VP2362"/>
<dbReference type="PATRIC" id="fig|223926.6.peg.2266"/>
<dbReference type="eggNOG" id="COG3248">
    <property type="taxonomic scope" value="Bacteria"/>
</dbReference>
<dbReference type="HOGENOM" id="CLU_962051_0_0_6"/>
<dbReference type="Proteomes" id="UP000002493">
    <property type="component" value="Chromosome 1"/>
</dbReference>
<dbReference type="GO" id="GO:0009279">
    <property type="term" value="C:cell outer membrane"/>
    <property type="evidence" value="ECO:0007669"/>
    <property type="project" value="UniProtKB-SubCell"/>
</dbReference>
<dbReference type="GO" id="GO:0005337">
    <property type="term" value="F:nucleoside transmembrane transporter activity"/>
    <property type="evidence" value="ECO:0007669"/>
    <property type="project" value="InterPro"/>
</dbReference>
<dbReference type="FunFam" id="2.40.230.20:FF:000002">
    <property type="entry name" value="Nucleoside-specific outer membrane porin OmpK"/>
    <property type="match status" value="1"/>
</dbReference>
<dbReference type="Gene3D" id="2.40.230.20">
    <property type="entry name" value="Nucleoside-specific channel-forming protein, Tsx-like"/>
    <property type="match status" value="1"/>
</dbReference>
<dbReference type="InterPro" id="IPR003055">
    <property type="entry name" value="Channel_Tsx"/>
</dbReference>
<dbReference type="InterPro" id="IPR018013">
    <property type="entry name" value="Channel_Tsx-like"/>
</dbReference>
<dbReference type="InterPro" id="IPR036777">
    <property type="entry name" value="Channel_Tsx-like_sf"/>
</dbReference>
<dbReference type="Pfam" id="PF03502">
    <property type="entry name" value="Channel_Tsx"/>
    <property type="match status" value="1"/>
</dbReference>
<dbReference type="PRINTS" id="PR01277">
    <property type="entry name" value="CHANNELTSX"/>
</dbReference>
<dbReference type="SUPFAM" id="SSF111364">
    <property type="entry name" value="Tsx-like channel"/>
    <property type="match status" value="1"/>
</dbReference>
<evidence type="ECO:0000250" key="1">
    <source>
        <dbReference type="UniProtKB" id="P51002"/>
    </source>
</evidence>
<evidence type="ECO:0000255" key="2"/>
<evidence type="ECO:0000305" key="3"/>
<keyword id="KW-0998">Cell outer membrane</keyword>
<keyword id="KW-0472">Membrane</keyword>
<keyword id="KW-0732">Signal</keyword>
<accession>P59570</accession>